<gene>
    <name type="ORF">SPAC22A12.10</name>
</gene>
<organism>
    <name type="scientific">Schizosaccharomyces pombe (strain 972 / ATCC 24843)</name>
    <name type="common">Fission yeast</name>
    <dbReference type="NCBI Taxonomy" id="284812"/>
    <lineage>
        <taxon>Eukaryota</taxon>
        <taxon>Fungi</taxon>
        <taxon>Dikarya</taxon>
        <taxon>Ascomycota</taxon>
        <taxon>Taphrinomycotina</taxon>
        <taxon>Schizosaccharomycetes</taxon>
        <taxon>Schizosaccharomycetales</taxon>
        <taxon>Schizosaccharomycetaceae</taxon>
        <taxon>Schizosaccharomyces</taxon>
    </lineage>
</organism>
<evidence type="ECO:0000255" key="1"/>
<evidence type="ECO:0000305" key="2"/>
<accession>O13901</accession>
<name>YF3A_SCHPO</name>
<reference key="1">
    <citation type="journal article" date="2002" name="Nature">
        <title>The genome sequence of Schizosaccharomyces pombe.</title>
        <authorList>
            <person name="Wood V."/>
            <person name="Gwilliam R."/>
            <person name="Rajandream M.A."/>
            <person name="Lyne M.H."/>
            <person name="Lyne R."/>
            <person name="Stewart A."/>
            <person name="Sgouros J.G."/>
            <person name="Peat N."/>
            <person name="Hayles J."/>
            <person name="Baker S.G."/>
            <person name="Basham D."/>
            <person name="Bowman S."/>
            <person name="Brooks K."/>
            <person name="Brown D."/>
            <person name="Brown S."/>
            <person name="Chillingworth T."/>
            <person name="Churcher C.M."/>
            <person name="Collins M."/>
            <person name="Connor R."/>
            <person name="Cronin A."/>
            <person name="Davis P."/>
            <person name="Feltwell T."/>
            <person name="Fraser A."/>
            <person name="Gentles S."/>
            <person name="Goble A."/>
            <person name="Hamlin N."/>
            <person name="Harris D.E."/>
            <person name="Hidalgo J."/>
            <person name="Hodgson G."/>
            <person name="Holroyd S."/>
            <person name="Hornsby T."/>
            <person name="Howarth S."/>
            <person name="Huckle E.J."/>
            <person name="Hunt S."/>
            <person name="Jagels K."/>
            <person name="James K.D."/>
            <person name="Jones L."/>
            <person name="Jones M."/>
            <person name="Leather S."/>
            <person name="McDonald S."/>
            <person name="McLean J."/>
            <person name="Mooney P."/>
            <person name="Moule S."/>
            <person name="Mungall K.L."/>
            <person name="Murphy L.D."/>
            <person name="Niblett D."/>
            <person name="Odell C."/>
            <person name="Oliver K."/>
            <person name="O'Neil S."/>
            <person name="Pearson D."/>
            <person name="Quail M.A."/>
            <person name="Rabbinowitsch E."/>
            <person name="Rutherford K.M."/>
            <person name="Rutter S."/>
            <person name="Saunders D."/>
            <person name="Seeger K."/>
            <person name="Sharp S."/>
            <person name="Skelton J."/>
            <person name="Simmonds M.N."/>
            <person name="Squares R."/>
            <person name="Squares S."/>
            <person name="Stevens K."/>
            <person name="Taylor K."/>
            <person name="Taylor R.G."/>
            <person name="Tivey A."/>
            <person name="Walsh S.V."/>
            <person name="Warren T."/>
            <person name="Whitehead S."/>
            <person name="Woodward J.R."/>
            <person name="Volckaert G."/>
            <person name="Aert R."/>
            <person name="Robben J."/>
            <person name="Grymonprez B."/>
            <person name="Weltjens I."/>
            <person name="Vanstreels E."/>
            <person name="Rieger M."/>
            <person name="Schaefer M."/>
            <person name="Mueller-Auer S."/>
            <person name="Gabel C."/>
            <person name="Fuchs M."/>
            <person name="Duesterhoeft A."/>
            <person name="Fritzc C."/>
            <person name="Holzer E."/>
            <person name="Moestl D."/>
            <person name="Hilbert H."/>
            <person name="Borzym K."/>
            <person name="Langer I."/>
            <person name="Beck A."/>
            <person name="Lehrach H."/>
            <person name="Reinhardt R."/>
            <person name="Pohl T.M."/>
            <person name="Eger P."/>
            <person name="Zimmermann W."/>
            <person name="Wedler H."/>
            <person name="Wambutt R."/>
            <person name="Purnelle B."/>
            <person name="Goffeau A."/>
            <person name="Cadieu E."/>
            <person name="Dreano S."/>
            <person name="Gloux S."/>
            <person name="Lelaure V."/>
            <person name="Mottier S."/>
            <person name="Galibert F."/>
            <person name="Aves S.J."/>
            <person name="Xiang Z."/>
            <person name="Hunt C."/>
            <person name="Moore K."/>
            <person name="Hurst S.M."/>
            <person name="Lucas M."/>
            <person name="Rochet M."/>
            <person name="Gaillardin C."/>
            <person name="Tallada V.A."/>
            <person name="Garzon A."/>
            <person name="Thode G."/>
            <person name="Daga R.R."/>
            <person name="Cruzado L."/>
            <person name="Jimenez J."/>
            <person name="Sanchez M."/>
            <person name="del Rey F."/>
            <person name="Benito J."/>
            <person name="Dominguez A."/>
            <person name="Revuelta J.L."/>
            <person name="Moreno S."/>
            <person name="Armstrong J."/>
            <person name="Forsburg S.L."/>
            <person name="Cerutti L."/>
            <person name="Lowe T."/>
            <person name="McCombie W.R."/>
            <person name="Paulsen I."/>
            <person name="Potashkin J."/>
            <person name="Shpakovski G.V."/>
            <person name="Ussery D."/>
            <person name="Barrell B.G."/>
            <person name="Nurse P."/>
        </authorList>
    </citation>
    <scope>NUCLEOTIDE SEQUENCE [LARGE SCALE GENOMIC DNA]</scope>
    <source>
        <strain>972 / ATCC 24843</strain>
    </source>
</reference>
<keyword id="KW-0472">Membrane</keyword>
<keyword id="KW-1185">Reference proteome</keyword>
<keyword id="KW-0808">Transferase</keyword>
<keyword id="KW-0812">Transmembrane</keyword>
<keyword id="KW-1133">Transmembrane helix</keyword>
<feature type="chain" id="PRO_0000318106" description="Uncharacterized CDP-alcohol phosphatidyltransferase class-I family protein C22A12.10">
    <location>
        <begin position="1"/>
        <end position="386"/>
    </location>
</feature>
<feature type="transmembrane region" description="Helical" evidence="1">
    <location>
        <begin position="48"/>
        <end position="68"/>
    </location>
</feature>
<feature type="transmembrane region" description="Helical" evidence="1">
    <location>
        <begin position="78"/>
        <end position="98"/>
    </location>
</feature>
<feature type="transmembrane region" description="Helical" evidence="1">
    <location>
        <begin position="136"/>
        <end position="156"/>
    </location>
</feature>
<feature type="transmembrane region" description="Helical" evidence="1">
    <location>
        <begin position="171"/>
        <end position="191"/>
    </location>
</feature>
<feature type="transmembrane region" description="Helical" evidence="1">
    <location>
        <begin position="213"/>
        <end position="233"/>
    </location>
</feature>
<feature type="transmembrane region" description="Helical" evidence="1">
    <location>
        <begin position="253"/>
        <end position="273"/>
    </location>
</feature>
<feature type="transmembrane region" description="Helical" evidence="1">
    <location>
        <begin position="285"/>
        <end position="305"/>
    </location>
</feature>
<feature type="transmembrane region" description="Helical" evidence="1">
    <location>
        <begin position="316"/>
        <end position="336"/>
    </location>
</feature>
<feature type="transmembrane region" description="Helical" evidence="1">
    <location>
        <begin position="344"/>
        <end position="364"/>
    </location>
</feature>
<proteinExistence type="inferred from homology"/>
<comment type="subcellular location">
    <subcellularLocation>
        <location evidence="2">Membrane</location>
        <topology evidence="2">Multi-pass membrane protein</topology>
    </subcellularLocation>
</comment>
<comment type="similarity">
    <text evidence="2">Belongs to the CDP-alcohol phosphatidyltransferase class-I family.</text>
</comment>
<protein>
    <recommendedName>
        <fullName>Uncharacterized CDP-alcohol phosphatidyltransferase class-I family protein C22A12.10</fullName>
    </recommendedName>
</protein>
<sequence>MQLNRKQLKNLHNYKYSAIDNSLLSKYILKPYWWNQLLKVIPMSMAPNLITLIGLGFVVINILTMLVYKYHYEMDAFPSWVYASWAIGLFLYQSFDAIDGSQARRTGTSSPLGQLFDHGVDAINTSFEVLLTIELLQLDMFSSILTQFASLLYFYISTWEEYHTGTLYLSYFSGPVEGIVMVIGLFALTAIKGDSFWLKLHPTPESWGFVRSFLPYYTYGSCLYNFMAFALLLNVLQSLRNALQAVQKNNGSVIKALSGILPYFLQWMAVFSLYAKYPAFFEHHFLTIFCLNAFIFAYSVGVVIVSHITESPFPYWNVLILPFLVDAVDAYTFGVLKNVQTEYFFCYVGICIGVYGNFVAHVIAMITEEYGIKCLTIPSKPESKKN</sequence>
<dbReference type="EMBL" id="CU329670">
    <property type="protein sequence ID" value="CAB16580.1"/>
    <property type="molecule type" value="Genomic_DNA"/>
</dbReference>
<dbReference type="PIR" id="T38150">
    <property type="entry name" value="T38150"/>
</dbReference>
<dbReference type="SMR" id="O13901"/>
<dbReference type="BioGRID" id="278320">
    <property type="interactions" value="2"/>
</dbReference>
<dbReference type="FunCoup" id="O13901">
    <property type="interactions" value="324"/>
</dbReference>
<dbReference type="STRING" id="284812.O13901"/>
<dbReference type="iPTMnet" id="O13901"/>
<dbReference type="SwissPalm" id="O13901"/>
<dbReference type="PaxDb" id="4896-SPAC22A12.10.1"/>
<dbReference type="EnsemblFungi" id="SPAC22A12.10.1">
    <property type="protein sequence ID" value="SPAC22A12.10.1:pep"/>
    <property type="gene ID" value="SPAC22A12.10"/>
</dbReference>
<dbReference type="KEGG" id="spo:2541829"/>
<dbReference type="PomBase" id="SPAC22A12.10"/>
<dbReference type="VEuPathDB" id="FungiDB:SPAC22A12.10"/>
<dbReference type="eggNOG" id="KOG2877">
    <property type="taxonomic scope" value="Eukaryota"/>
</dbReference>
<dbReference type="HOGENOM" id="CLU_035066_5_0_1"/>
<dbReference type="InParanoid" id="O13901"/>
<dbReference type="OMA" id="QNMGQGW"/>
<dbReference type="PhylomeDB" id="O13901"/>
<dbReference type="Reactome" id="R-SPO-1483191">
    <property type="pathway name" value="Synthesis of PC"/>
</dbReference>
<dbReference type="Reactome" id="R-SPO-1483213">
    <property type="pathway name" value="Synthesis of PE"/>
</dbReference>
<dbReference type="PRO" id="PR:O13901"/>
<dbReference type="Proteomes" id="UP000002485">
    <property type="component" value="Chromosome I"/>
</dbReference>
<dbReference type="GO" id="GO:0005783">
    <property type="term" value="C:endoplasmic reticulum"/>
    <property type="evidence" value="ECO:0000269"/>
    <property type="project" value="PomBase"/>
</dbReference>
<dbReference type="GO" id="GO:0005789">
    <property type="term" value="C:endoplasmic reticulum membrane"/>
    <property type="evidence" value="ECO:0000305"/>
    <property type="project" value="PomBase"/>
</dbReference>
<dbReference type="GO" id="GO:0005635">
    <property type="term" value="C:nuclear envelope"/>
    <property type="evidence" value="ECO:0000269"/>
    <property type="project" value="PomBase"/>
</dbReference>
<dbReference type="GO" id="GO:0004142">
    <property type="term" value="F:diacylglycerol cholinephosphotransferase activity"/>
    <property type="evidence" value="ECO:0000266"/>
    <property type="project" value="PomBase"/>
</dbReference>
<dbReference type="GO" id="GO:0004307">
    <property type="term" value="F:ethanolaminephosphotransferase activity"/>
    <property type="evidence" value="ECO:0000266"/>
    <property type="project" value="PomBase"/>
</dbReference>
<dbReference type="GO" id="GO:0101026">
    <property type="term" value="P:mitotic nuclear membrane biogenesis"/>
    <property type="evidence" value="ECO:0000315"/>
    <property type="project" value="PomBase"/>
</dbReference>
<dbReference type="GO" id="GO:0006654">
    <property type="term" value="P:phosphatidic acid biosynthetic process"/>
    <property type="evidence" value="ECO:0000315"/>
    <property type="project" value="PomBase"/>
</dbReference>
<dbReference type="GO" id="GO:0006656">
    <property type="term" value="P:phosphatidylcholine biosynthetic process"/>
    <property type="evidence" value="ECO:0000266"/>
    <property type="project" value="PomBase"/>
</dbReference>
<dbReference type="GO" id="GO:0006646">
    <property type="term" value="P:phosphatidylethanolamine biosynthetic process"/>
    <property type="evidence" value="ECO:0000266"/>
    <property type="project" value="PomBase"/>
</dbReference>
<dbReference type="Gene3D" id="1.20.120.1760">
    <property type="match status" value="1"/>
</dbReference>
<dbReference type="InterPro" id="IPR000462">
    <property type="entry name" value="CDP-OH_P_trans"/>
</dbReference>
<dbReference type="InterPro" id="IPR043130">
    <property type="entry name" value="CDP-OH_PTrfase_TM_dom"/>
</dbReference>
<dbReference type="InterPro" id="IPR048254">
    <property type="entry name" value="CDP_ALCOHOL_P_TRANSF_CS"/>
</dbReference>
<dbReference type="InterPro" id="IPR014472">
    <property type="entry name" value="CHOPT"/>
</dbReference>
<dbReference type="PANTHER" id="PTHR10414:SF37">
    <property type="entry name" value="BB IN A BOXCAR, ISOFORM C"/>
    <property type="match status" value="1"/>
</dbReference>
<dbReference type="PANTHER" id="PTHR10414">
    <property type="entry name" value="ETHANOLAMINEPHOSPHOTRANSFERASE"/>
    <property type="match status" value="1"/>
</dbReference>
<dbReference type="Pfam" id="PF01066">
    <property type="entry name" value="CDP-OH_P_transf"/>
    <property type="match status" value="1"/>
</dbReference>
<dbReference type="PIRSF" id="PIRSF015665">
    <property type="entry name" value="CHOPT"/>
    <property type="match status" value="1"/>
</dbReference>
<dbReference type="PROSITE" id="PS00379">
    <property type="entry name" value="CDP_ALCOHOL_P_TRANSF"/>
    <property type="match status" value="1"/>
</dbReference>